<name>TRXM_CHLRE</name>
<evidence type="ECO:0000250" key="1"/>
<evidence type="ECO:0000255" key="2">
    <source>
        <dbReference type="PROSITE-ProRule" id="PRU00691"/>
    </source>
</evidence>
<evidence type="ECO:0000269" key="3">
    <source>
    </source>
</evidence>
<evidence type="ECO:0000305" key="4"/>
<evidence type="ECO:0007829" key="5">
    <source>
        <dbReference type="PDB" id="1DBY"/>
    </source>
</evidence>
<sequence>MALVARRAAVPSARSSARPAFARAAPRRSVVVRAEAGAVNDDTFKNVVLESSVPVLVDFWAPWCGPCRIIAPVVDEIAGEYKDKLKCVKLNTDESPNVASEYGIRSIPTIMVFKGGKKCETIIGAVPKATIVQTVEKYLN</sequence>
<feature type="transit peptide" description="Chloroplast" evidence="3">
    <location>
        <begin position="1"/>
        <end position="34"/>
    </location>
</feature>
<feature type="chain" id="PRO_0000034174" description="Thioredoxin M-type, chloroplastic">
    <location>
        <begin position="35"/>
        <end position="140"/>
    </location>
</feature>
<feature type="domain" description="Thioredoxin" evidence="2">
    <location>
        <begin position="35"/>
        <end position="140"/>
    </location>
</feature>
<feature type="active site" description="Nucleophile">
    <location>
        <position position="64"/>
    </location>
</feature>
<feature type="active site" description="Nucleophile">
    <location>
        <position position="67"/>
    </location>
</feature>
<feature type="site" description="Deprotonates C-terminal active site Cys">
    <location>
        <position position="58"/>
    </location>
</feature>
<feature type="site" description="Contributes to redox potential value">
    <location>
        <position position="65"/>
    </location>
</feature>
<feature type="site" description="Contributes to redox potential value">
    <location>
        <position position="66"/>
    </location>
</feature>
<feature type="disulfide bond" description="Redox-active" evidence="2 3">
    <location>
        <begin position="64"/>
        <end position="67"/>
    </location>
</feature>
<feature type="sequence conflict" description="In Ref. 3; AA sequence." evidence="4" ref="3">
    <original>DD</original>
    <variation>EE</variation>
    <location>
        <begin position="41"/>
        <end position="42"/>
    </location>
</feature>
<feature type="sequence conflict" description="In Ref. 3; AA sequence." evidence="4" ref="3">
    <original>C</original>
    <variation>E</variation>
    <location>
        <position position="87"/>
    </location>
</feature>
<feature type="sequence conflict" description="In Ref. 3; AA sequence." evidence="4" ref="3">
    <original>C</original>
    <variation>D</variation>
    <location>
        <position position="119"/>
    </location>
</feature>
<feature type="strand" evidence="5">
    <location>
        <begin position="37"/>
        <end position="39"/>
    </location>
</feature>
<feature type="helix" evidence="5">
    <location>
        <begin position="41"/>
        <end position="47"/>
    </location>
</feature>
<feature type="turn" evidence="5">
    <location>
        <begin position="48"/>
        <end position="50"/>
    </location>
</feature>
<feature type="strand" evidence="5">
    <location>
        <begin position="55"/>
        <end position="60"/>
    </location>
</feature>
<feature type="helix" evidence="5">
    <location>
        <begin position="65"/>
        <end position="80"/>
    </location>
</feature>
<feature type="turn" evidence="5">
    <location>
        <begin position="81"/>
        <end position="84"/>
    </location>
</feature>
<feature type="strand" evidence="5">
    <location>
        <begin position="86"/>
        <end position="91"/>
    </location>
</feature>
<feature type="turn" evidence="5">
    <location>
        <begin position="92"/>
        <end position="94"/>
    </location>
</feature>
<feature type="helix" evidence="5">
    <location>
        <begin position="96"/>
        <end position="102"/>
    </location>
</feature>
<feature type="strand" evidence="5">
    <location>
        <begin position="109"/>
        <end position="124"/>
    </location>
</feature>
<feature type="helix" evidence="5">
    <location>
        <begin position="128"/>
        <end position="138"/>
    </location>
</feature>
<protein>
    <recommendedName>
        <fullName>Thioredoxin M-type, chloroplastic</fullName>
        <shortName>Trx-M</shortName>
    </recommendedName>
    <alternativeName>
        <fullName>Thioredoxin-CH2</fullName>
    </alternativeName>
</protein>
<gene>
    <name type="primary">TRXM</name>
</gene>
<dbReference type="EMBL" id="X80888">
    <property type="protein sequence ID" value="CAA56851.1"/>
    <property type="molecule type" value="Genomic_DNA"/>
</dbReference>
<dbReference type="EMBL" id="X78821">
    <property type="protein sequence ID" value="CAA55398.1"/>
    <property type="molecule type" value="mRNA"/>
</dbReference>
<dbReference type="EMBL" id="X62335">
    <property type="protein sequence ID" value="CAA44209.1"/>
    <property type="molecule type" value="mRNA"/>
</dbReference>
<dbReference type="PIR" id="S57774">
    <property type="entry name" value="S57774"/>
</dbReference>
<dbReference type="RefSeq" id="XP_001690314.1">
    <property type="nucleotide sequence ID" value="XM_001690262.1"/>
</dbReference>
<dbReference type="PDB" id="1DBY">
    <property type="method" value="NMR"/>
    <property type="chains" value="A=35-140"/>
</dbReference>
<dbReference type="PDBsum" id="1DBY"/>
<dbReference type="SMR" id="P23400"/>
<dbReference type="PaxDb" id="3055-EDP10052"/>
<dbReference type="ProMEX" id="P23400"/>
<dbReference type="eggNOG" id="KOG0910">
    <property type="taxonomic scope" value="Eukaryota"/>
</dbReference>
<dbReference type="HOGENOM" id="CLU_090389_0_2_1"/>
<dbReference type="OMA" id="YKNNKEW"/>
<dbReference type="EvolutionaryTrace" id="P23400"/>
<dbReference type="GO" id="GO:0009507">
    <property type="term" value="C:chloroplast"/>
    <property type="evidence" value="ECO:0007669"/>
    <property type="project" value="UniProtKB-SubCell"/>
</dbReference>
<dbReference type="GO" id="GO:0015035">
    <property type="term" value="F:protein-disulfide reductase activity"/>
    <property type="evidence" value="ECO:0007669"/>
    <property type="project" value="InterPro"/>
</dbReference>
<dbReference type="CDD" id="cd02947">
    <property type="entry name" value="TRX_family"/>
    <property type="match status" value="1"/>
</dbReference>
<dbReference type="FunFam" id="3.40.30.10:FF:000001">
    <property type="entry name" value="Thioredoxin"/>
    <property type="match status" value="1"/>
</dbReference>
<dbReference type="Gene3D" id="3.40.30.10">
    <property type="entry name" value="Glutaredoxin"/>
    <property type="match status" value="1"/>
</dbReference>
<dbReference type="InterPro" id="IPR005746">
    <property type="entry name" value="Thioredoxin"/>
</dbReference>
<dbReference type="InterPro" id="IPR036249">
    <property type="entry name" value="Thioredoxin-like_sf"/>
</dbReference>
<dbReference type="InterPro" id="IPR017937">
    <property type="entry name" value="Thioredoxin_CS"/>
</dbReference>
<dbReference type="InterPro" id="IPR013766">
    <property type="entry name" value="Thioredoxin_domain"/>
</dbReference>
<dbReference type="NCBIfam" id="TIGR01068">
    <property type="entry name" value="thioredoxin"/>
    <property type="match status" value="1"/>
</dbReference>
<dbReference type="PANTHER" id="PTHR45663">
    <property type="entry name" value="GEO12009P1"/>
    <property type="match status" value="1"/>
</dbReference>
<dbReference type="PANTHER" id="PTHR45663:SF11">
    <property type="entry name" value="GEO12009P1"/>
    <property type="match status" value="1"/>
</dbReference>
<dbReference type="Pfam" id="PF00085">
    <property type="entry name" value="Thioredoxin"/>
    <property type="match status" value="1"/>
</dbReference>
<dbReference type="PRINTS" id="PR00421">
    <property type="entry name" value="THIOREDOXIN"/>
</dbReference>
<dbReference type="SUPFAM" id="SSF52833">
    <property type="entry name" value="Thioredoxin-like"/>
    <property type="match status" value="1"/>
</dbReference>
<dbReference type="PROSITE" id="PS00194">
    <property type="entry name" value="THIOREDOXIN_1"/>
    <property type="match status" value="1"/>
</dbReference>
<dbReference type="PROSITE" id="PS51352">
    <property type="entry name" value="THIOREDOXIN_2"/>
    <property type="match status" value="1"/>
</dbReference>
<reference key="1">
    <citation type="journal article" date="1995" name="Plant Mol. Biol.">
        <title>Chlamydomonas reinhardtii thioredoxins: structure of the genes coding for the chloroplastic m and cytosolic h isoforms; expression in Escherichia coli of the recombinant proteins, purification and biochemical properties.</title>
        <authorList>
            <person name="Stein M."/>
            <person name="Jacquot J.-P."/>
            <person name="Jeannette E."/>
            <person name="Decottignies P."/>
            <person name="Hodges M."/>
            <person name="Lancelin J.-M."/>
            <person name="Mittard V."/>
            <person name="Schmitter J.-M."/>
            <person name="Miginiac-Maslow M."/>
        </authorList>
    </citation>
    <scope>NUCLEOTIDE SEQUENCE [GENOMIC DNA / MRNA]</scope>
</reference>
<reference key="2">
    <citation type="journal article" date="1992" name="Nucleic Acids Res.">
        <title>PCR cloning of a nucleotidic sequence coding for the mature part of Chlamydomonas reinhardtii thioredoxin Ch2.</title>
        <authorList>
            <person name="Jacquot J.-P."/>
            <person name="Stein M."/>
            <person name="Hodges M."/>
            <person name="Miginiac-Maslow M."/>
        </authorList>
    </citation>
    <scope>NUCLEOTIDE SEQUENCE [MRNA] OF 35-140</scope>
</reference>
<reference key="3">
    <citation type="journal article" date="1990" name="Arch. Biochem. Biophys.">
        <title>Purification, characterization, and complete amino acid sequence of a thioredoxin from a green alga, Chlamydomonas reinhardtii.</title>
        <authorList>
            <person name="Decottignies P."/>
            <person name="Schmitter J.-M."/>
            <person name="Jacquot J.-P."/>
            <person name="Dutka S."/>
            <person name="Picaud A."/>
            <person name="Gadal P."/>
        </authorList>
    </citation>
    <scope>PROTEIN SEQUENCE OF 35-140</scope>
    <scope>DISULFIDE BOND</scope>
    <source>
        <strain>137c / CC-125</strain>
    </source>
</reference>
<reference key="4">
    <citation type="submission" date="1999-11" db="PDB data bank">
        <title>NMR structure and dynamic of the chloroplast thioredoxin M CH2 from the green alga Chlamydomonas reinhardtii.</title>
        <authorList>
            <person name="Lancelin J.-M."/>
            <person name="Guilhaudis L."/>
            <person name="Krimm I."/>
            <person name="Blackledge M.J."/>
            <person name="Marion D."/>
            <person name="Jacquot J.-P."/>
        </authorList>
    </citation>
    <scope>STRUCTURE BY NMR</scope>
</reference>
<organism>
    <name type="scientific">Chlamydomonas reinhardtii</name>
    <name type="common">Chlamydomonas smithii</name>
    <dbReference type="NCBI Taxonomy" id="3055"/>
    <lineage>
        <taxon>Eukaryota</taxon>
        <taxon>Viridiplantae</taxon>
        <taxon>Chlorophyta</taxon>
        <taxon>core chlorophytes</taxon>
        <taxon>Chlorophyceae</taxon>
        <taxon>CS clade</taxon>
        <taxon>Chlamydomonadales</taxon>
        <taxon>Chlamydomonadaceae</taxon>
        <taxon>Chlamydomonas</taxon>
    </lineage>
</organism>
<proteinExistence type="evidence at protein level"/>
<comment type="function">
    <text evidence="1">Participates in various redox reactions through the reversible oxidation of the active center dithiol to a disulfide. The M form is known to activate NADP-malate dehydrogenase (By similarity).</text>
</comment>
<comment type="subunit">
    <text evidence="1">Forms a complex with heterodimeric ferredoxin-thioredoxin reductase (FTR) and ferredoxin.</text>
</comment>
<comment type="subcellular location">
    <subcellularLocation>
        <location evidence="1">Plastid</location>
        <location evidence="1">Chloroplast</location>
    </subcellularLocation>
</comment>
<comment type="similarity">
    <text evidence="4">Belongs to the thioredoxin family. Plant M-type subfamily.</text>
</comment>
<keyword id="KW-0002">3D-structure</keyword>
<keyword id="KW-0150">Chloroplast</keyword>
<keyword id="KW-0903">Direct protein sequencing</keyword>
<keyword id="KW-1015">Disulfide bond</keyword>
<keyword id="KW-0249">Electron transport</keyword>
<keyword id="KW-0934">Plastid</keyword>
<keyword id="KW-0676">Redox-active center</keyword>
<keyword id="KW-0809">Transit peptide</keyword>
<keyword id="KW-0813">Transport</keyword>
<accession>P23400</accession>